<protein>
    <recommendedName>
        <fullName>V-type proton ATPase subunit d</fullName>
        <shortName>V-ATPase subunit d</shortName>
    </recommendedName>
    <alternativeName>
        <fullName>V-ATPase 39 kDa subunit</fullName>
    </alternativeName>
    <alternativeName>
        <fullName>V-ATPase subunit M39</fullName>
    </alternativeName>
    <alternativeName>
        <fullName>Vacuolar proton pump subunit d</fullName>
    </alternativeName>
</protein>
<dbReference type="EMBL" id="L11584">
    <property type="protein sequence ID" value="AAA35210.1"/>
    <property type="molecule type" value="Genomic_DNA"/>
</dbReference>
<dbReference type="EMBL" id="U22382">
    <property type="protein sequence ID" value="AAB67533.1"/>
    <property type="molecule type" value="Genomic_DNA"/>
</dbReference>
<dbReference type="EMBL" id="BK006945">
    <property type="protein sequence ID" value="DAA09747.1"/>
    <property type="molecule type" value="Genomic_DNA"/>
</dbReference>
<dbReference type="PIR" id="S55969">
    <property type="entry name" value="S55969"/>
</dbReference>
<dbReference type="RefSeq" id="NP_013552.3">
    <property type="nucleotide sequence ID" value="NM_001182335.3"/>
</dbReference>
<dbReference type="PDB" id="3J9T">
    <property type="method" value="EM"/>
    <property type="resolution" value="6.90 A"/>
    <property type="chains" value="Q=1-345"/>
</dbReference>
<dbReference type="PDB" id="3J9U">
    <property type="method" value="EM"/>
    <property type="resolution" value="7.60 A"/>
    <property type="chains" value="Q=1-345"/>
</dbReference>
<dbReference type="PDB" id="3J9V">
    <property type="method" value="EM"/>
    <property type="resolution" value="8.30 A"/>
    <property type="chains" value="Q=1-345"/>
</dbReference>
<dbReference type="PDB" id="5TJ5">
    <property type="method" value="EM"/>
    <property type="resolution" value="3.90 A"/>
    <property type="chains" value="P=4-155, P=176-201, P=284-341"/>
</dbReference>
<dbReference type="PDB" id="5VOX">
    <property type="method" value="EM"/>
    <property type="resolution" value="6.80 A"/>
    <property type="chains" value="Q=1-345"/>
</dbReference>
<dbReference type="PDB" id="5VOY">
    <property type="method" value="EM"/>
    <property type="resolution" value="7.90 A"/>
    <property type="chains" value="Q=1-345"/>
</dbReference>
<dbReference type="PDB" id="5VOZ">
    <property type="method" value="EM"/>
    <property type="resolution" value="7.60 A"/>
    <property type="chains" value="Q=1-345"/>
</dbReference>
<dbReference type="PDB" id="6C6L">
    <property type="method" value="EM"/>
    <property type="resolution" value="3.50 A"/>
    <property type="chains" value="B=1-345"/>
</dbReference>
<dbReference type="PDB" id="6M0R">
    <property type="method" value="EM"/>
    <property type="resolution" value="2.70 A"/>
    <property type="chains" value="B=1-345"/>
</dbReference>
<dbReference type="PDB" id="6M0S">
    <property type="method" value="EM"/>
    <property type="resolution" value="3.60 A"/>
    <property type="chains" value="B=1-345"/>
</dbReference>
<dbReference type="PDB" id="6O7T">
    <property type="method" value="EM"/>
    <property type="resolution" value="3.20 A"/>
    <property type="chains" value="d=1-345"/>
</dbReference>
<dbReference type="PDB" id="6O7U">
    <property type="method" value="EM"/>
    <property type="resolution" value="3.10 A"/>
    <property type="chains" value="d=1-345"/>
</dbReference>
<dbReference type="PDB" id="6O7V">
    <property type="method" value="EM"/>
    <property type="resolution" value="6.60 A"/>
    <property type="chains" value="d=1-345"/>
</dbReference>
<dbReference type="PDB" id="6O7W">
    <property type="method" value="EM"/>
    <property type="resolution" value="7.00 A"/>
    <property type="chains" value="d=1-345"/>
</dbReference>
<dbReference type="PDB" id="6O7X">
    <property type="method" value="EM"/>
    <property type="resolution" value="8.70 A"/>
    <property type="chains" value="d=1-345"/>
</dbReference>
<dbReference type="PDB" id="6PE4">
    <property type="method" value="EM"/>
    <property type="resolution" value="3.10 A"/>
    <property type="chains" value="D=1-345"/>
</dbReference>
<dbReference type="PDB" id="6PE5">
    <property type="method" value="EM"/>
    <property type="resolution" value="3.20 A"/>
    <property type="chains" value="D=1-345"/>
</dbReference>
<dbReference type="PDB" id="7FDA">
    <property type="method" value="EM"/>
    <property type="resolution" value="4.20 A"/>
    <property type="chains" value="S=1-345"/>
</dbReference>
<dbReference type="PDB" id="7FDB">
    <property type="method" value="EM"/>
    <property type="resolution" value="4.80 A"/>
    <property type="chains" value="S=1-345"/>
</dbReference>
<dbReference type="PDB" id="7FDC">
    <property type="method" value="EM"/>
    <property type="resolution" value="6.60 A"/>
    <property type="chains" value="S=1-345"/>
</dbReference>
<dbReference type="PDB" id="7TAO">
    <property type="method" value="EM"/>
    <property type="resolution" value="3.20 A"/>
    <property type="chains" value="B=1-345"/>
</dbReference>
<dbReference type="PDB" id="7TAP">
    <property type="method" value="EM"/>
    <property type="resolution" value="2.80 A"/>
    <property type="chains" value="B=1-345"/>
</dbReference>
<dbReference type="PDB" id="7TMR">
    <property type="method" value="EM"/>
    <property type="resolution" value="3.50 A"/>
    <property type="chains" value="d=1-345"/>
</dbReference>
<dbReference type="PDB" id="7TMS">
    <property type="method" value="EM"/>
    <property type="resolution" value="3.80 A"/>
    <property type="chains" value="d=1-345"/>
</dbReference>
<dbReference type="PDB" id="7TMT">
    <property type="method" value="EM"/>
    <property type="resolution" value="3.80 A"/>
    <property type="chains" value="d=1-345"/>
</dbReference>
<dbReference type="PDB" id="8EAS">
    <property type="method" value="EM"/>
    <property type="resolution" value="2.60 A"/>
    <property type="chains" value="d=1-345"/>
</dbReference>
<dbReference type="PDB" id="8EAT">
    <property type="method" value="EM"/>
    <property type="resolution" value="3.10 A"/>
    <property type="chains" value="d=1-345"/>
</dbReference>
<dbReference type="PDB" id="8EAU">
    <property type="method" value="EM"/>
    <property type="resolution" value="3.10 A"/>
    <property type="chains" value="d=1-345"/>
</dbReference>
<dbReference type="PDB" id="9E76">
    <property type="method" value="EM"/>
    <property type="resolution" value="3.40 A"/>
    <property type="chains" value="B=1-345"/>
</dbReference>
<dbReference type="PDB" id="9E7L">
    <property type="method" value="EM"/>
    <property type="resolution" value="3.33 A"/>
    <property type="chains" value="B=1-345"/>
</dbReference>
<dbReference type="PDB" id="9MJ4">
    <property type="method" value="EM"/>
    <property type="resolution" value="3.70 A"/>
    <property type="chains" value="B=1-345"/>
</dbReference>
<dbReference type="PDBsum" id="3J9T"/>
<dbReference type="PDBsum" id="3J9U"/>
<dbReference type="PDBsum" id="3J9V"/>
<dbReference type="PDBsum" id="5TJ5"/>
<dbReference type="PDBsum" id="5VOX"/>
<dbReference type="PDBsum" id="5VOY"/>
<dbReference type="PDBsum" id="5VOZ"/>
<dbReference type="PDBsum" id="6C6L"/>
<dbReference type="PDBsum" id="6M0R"/>
<dbReference type="PDBsum" id="6M0S"/>
<dbReference type="PDBsum" id="6O7T"/>
<dbReference type="PDBsum" id="6O7U"/>
<dbReference type="PDBsum" id="6O7V"/>
<dbReference type="PDBsum" id="6O7W"/>
<dbReference type="PDBsum" id="6O7X"/>
<dbReference type="PDBsum" id="6PE4"/>
<dbReference type="PDBsum" id="6PE5"/>
<dbReference type="PDBsum" id="7FDA"/>
<dbReference type="PDBsum" id="7FDB"/>
<dbReference type="PDBsum" id="7FDC"/>
<dbReference type="PDBsum" id="7TAO"/>
<dbReference type="PDBsum" id="7TAP"/>
<dbReference type="PDBsum" id="7TMR"/>
<dbReference type="PDBsum" id="7TMS"/>
<dbReference type="PDBsum" id="7TMT"/>
<dbReference type="PDBsum" id="8EAS"/>
<dbReference type="PDBsum" id="8EAT"/>
<dbReference type="PDBsum" id="8EAU"/>
<dbReference type="PDBsum" id="9E76"/>
<dbReference type="PDBsum" id="9E7L"/>
<dbReference type="PDBsum" id="9MJ4"/>
<dbReference type="EMDB" id="EMD-0644"/>
<dbReference type="EMDB" id="EMD-0645"/>
<dbReference type="EMDB" id="EMD-0646"/>
<dbReference type="EMDB" id="EMD-0647"/>
<dbReference type="EMDB" id="EMD-0648"/>
<dbReference type="EMDB" id="EMD-20322"/>
<dbReference type="EMDB" id="EMD-20323"/>
<dbReference type="EMDB" id="EMD-25779"/>
<dbReference type="EMDB" id="EMD-25780"/>
<dbReference type="EMDB" id="EMD-26000"/>
<dbReference type="EMDB" id="EMD-26001"/>
<dbReference type="EMDB" id="EMD-26002"/>
<dbReference type="EMDB" id="EMD-27984"/>
<dbReference type="EMDB" id="EMD-27985"/>
<dbReference type="EMDB" id="EMD-27986"/>
<dbReference type="EMDB" id="EMD-30034"/>
<dbReference type="EMDB" id="EMD-30035"/>
<dbReference type="EMDB" id="EMD-31538"/>
<dbReference type="EMDB" id="EMD-31539"/>
<dbReference type="EMDB" id="EMD-31540"/>
<dbReference type="EMDB" id="EMD-47659"/>
<dbReference type="EMDB" id="EMD-47679"/>
<dbReference type="EMDB" id="EMD-48311"/>
<dbReference type="EMDB" id="EMD-7348"/>
<dbReference type="EMDB" id="EMD-8409"/>
<dbReference type="EMDB" id="EMD-8724"/>
<dbReference type="EMDB" id="EMD-8725"/>
<dbReference type="EMDB" id="EMD-8726"/>
<dbReference type="SMR" id="P32366"/>
<dbReference type="BioGRID" id="31705">
    <property type="interactions" value="122"/>
</dbReference>
<dbReference type="ComplexPortal" id="CPX-1192">
    <property type="entry name" value="Vacuolar proton translocating ATPase complex, Golgi variant"/>
</dbReference>
<dbReference type="ComplexPortal" id="CPX-1193">
    <property type="entry name" value="Vacuolar proton translocating ATPase complex, vacuole variant"/>
</dbReference>
<dbReference type="DIP" id="DIP-1737N"/>
<dbReference type="FunCoup" id="P32366">
    <property type="interactions" value="1057"/>
</dbReference>
<dbReference type="IntAct" id="P32366">
    <property type="interactions" value="64"/>
</dbReference>
<dbReference type="MINT" id="P32366"/>
<dbReference type="STRING" id="4932.YLR447C"/>
<dbReference type="TCDB" id="3.A.2.2.3">
    <property type="family name" value="the h+- or na+-translocating f-type, v-type and a-type atpase (f-atpase) superfamily"/>
</dbReference>
<dbReference type="iPTMnet" id="P32366"/>
<dbReference type="PaxDb" id="4932-YLR447C"/>
<dbReference type="PeptideAtlas" id="P32366"/>
<dbReference type="EnsemblFungi" id="YLR447C_mRNA">
    <property type="protein sequence ID" value="YLR447C"/>
    <property type="gene ID" value="YLR447C"/>
</dbReference>
<dbReference type="GeneID" id="851168"/>
<dbReference type="KEGG" id="sce:YLR447C"/>
<dbReference type="AGR" id="SGD:S000004439"/>
<dbReference type="SGD" id="S000004439">
    <property type="gene designation" value="VMA6"/>
</dbReference>
<dbReference type="VEuPathDB" id="FungiDB:YLR447C"/>
<dbReference type="eggNOG" id="KOG2957">
    <property type="taxonomic scope" value="Eukaryota"/>
</dbReference>
<dbReference type="GeneTree" id="ENSGT00390000002200"/>
<dbReference type="HOGENOM" id="CLU_051277_0_0_1"/>
<dbReference type="InParanoid" id="P32366"/>
<dbReference type="OMA" id="MTYGYMI"/>
<dbReference type="OrthoDB" id="10250083at2759"/>
<dbReference type="BioCyc" id="YEAST:G3O-32502-MONOMER"/>
<dbReference type="Reactome" id="R-SCE-1222556">
    <property type="pathway name" value="ROS and RNS production in phagocytes"/>
</dbReference>
<dbReference type="Reactome" id="R-SCE-77387">
    <property type="pathway name" value="Insulin receptor recycling"/>
</dbReference>
<dbReference type="Reactome" id="R-SCE-917977">
    <property type="pathway name" value="Transferrin endocytosis and recycling"/>
</dbReference>
<dbReference type="Reactome" id="R-SCE-9639288">
    <property type="pathway name" value="Amino acids regulate mTORC1"/>
</dbReference>
<dbReference type="SABIO-RK" id="P32366"/>
<dbReference type="BioGRID-ORCS" id="851168">
    <property type="hits" value="4 hits in 10 CRISPR screens"/>
</dbReference>
<dbReference type="EvolutionaryTrace" id="P32366"/>
<dbReference type="PRO" id="PR:P32366"/>
<dbReference type="Proteomes" id="UP000002311">
    <property type="component" value="Chromosome XII"/>
</dbReference>
<dbReference type="RNAct" id="P32366">
    <property type="molecule type" value="protein"/>
</dbReference>
<dbReference type="GO" id="GO:0000329">
    <property type="term" value="C:fungal-type vacuole membrane"/>
    <property type="evidence" value="ECO:0000314"/>
    <property type="project" value="SGD"/>
</dbReference>
<dbReference type="GO" id="GO:0000139">
    <property type="term" value="C:Golgi membrane"/>
    <property type="evidence" value="ECO:0000303"/>
    <property type="project" value="ComplexPortal"/>
</dbReference>
<dbReference type="GO" id="GO:0033176">
    <property type="term" value="C:proton-transporting V-type ATPase complex"/>
    <property type="evidence" value="ECO:0000353"/>
    <property type="project" value="ComplexPortal"/>
</dbReference>
<dbReference type="GO" id="GO:0016471">
    <property type="term" value="C:vacuolar proton-transporting V-type ATPase complex"/>
    <property type="evidence" value="ECO:0000353"/>
    <property type="project" value="ComplexPortal"/>
</dbReference>
<dbReference type="GO" id="GO:0000220">
    <property type="term" value="C:vacuolar proton-transporting V-type ATPase, V0 domain"/>
    <property type="evidence" value="ECO:0000314"/>
    <property type="project" value="UniProtKB"/>
</dbReference>
<dbReference type="GO" id="GO:0046961">
    <property type="term" value="F:proton-transporting ATPase activity, rotational mechanism"/>
    <property type="evidence" value="ECO:0000305"/>
    <property type="project" value="UniProtKB"/>
</dbReference>
<dbReference type="GO" id="GO:0048388">
    <property type="term" value="P:endosomal lumen acidification"/>
    <property type="evidence" value="ECO:0000303"/>
    <property type="project" value="ComplexPortal"/>
</dbReference>
<dbReference type="GO" id="GO:0061795">
    <property type="term" value="P:Golgi lumen acidification"/>
    <property type="evidence" value="ECO:0000303"/>
    <property type="project" value="ComplexPortal"/>
</dbReference>
<dbReference type="GO" id="GO:1902600">
    <property type="term" value="P:proton transmembrane transport"/>
    <property type="evidence" value="ECO:0000314"/>
    <property type="project" value="ComplexPortal"/>
</dbReference>
<dbReference type="GO" id="GO:0007035">
    <property type="term" value="P:vacuolar acidification"/>
    <property type="evidence" value="ECO:0000318"/>
    <property type="project" value="GO_Central"/>
</dbReference>
<dbReference type="GO" id="GO:0007034">
    <property type="term" value="P:vacuolar transport"/>
    <property type="evidence" value="ECO:0000314"/>
    <property type="project" value="SGD"/>
</dbReference>
<dbReference type="FunFam" id="1.20.1690.10:FF:000003">
    <property type="entry name" value="V-type proton ATPase subunit"/>
    <property type="match status" value="1"/>
</dbReference>
<dbReference type="FunFam" id="1.20.1690.10:FF:000005">
    <property type="entry name" value="V-type proton ATPase subunit"/>
    <property type="match status" value="1"/>
</dbReference>
<dbReference type="Gene3D" id="1.10.132.50">
    <property type="entry name" value="ATP synthase (C/AC39) subunit, domain 3"/>
    <property type="match status" value="1"/>
</dbReference>
<dbReference type="Gene3D" id="1.20.1690.10">
    <property type="entry name" value="V-type ATP synthase subunit C domain"/>
    <property type="match status" value="2"/>
</dbReference>
<dbReference type="InterPro" id="IPR036079">
    <property type="entry name" value="ATPase_csu/dsu_sf"/>
</dbReference>
<dbReference type="InterPro" id="IPR002843">
    <property type="entry name" value="ATPase_V0-cplx_csu/dsu"/>
</dbReference>
<dbReference type="InterPro" id="IPR016727">
    <property type="entry name" value="ATPase_V0-cplx_dsu"/>
</dbReference>
<dbReference type="InterPro" id="IPR035067">
    <property type="entry name" value="V-type_ATPase_csu/dsu"/>
</dbReference>
<dbReference type="InterPro" id="IPR044911">
    <property type="entry name" value="V-type_ATPase_csu/dsu_dom_3"/>
</dbReference>
<dbReference type="PANTHER" id="PTHR11028">
    <property type="entry name" value="VACUOLAR ATP SYNTHASE SUBUNIT AC39"/>
    <property type="match status" value="1"/>
</dbReference>
<dbReference type="Pfam" id="PF01992">
    <property type="entry name" value="vATP-synt_AC39"/>
    <property type="match status" value="1"/>
</dbReference>
<dbReference type="PIRSF" id="PIRSF018497">
    <property type="entry name" value="V-ATP_synth_D"/>
    <property type="match status" value="1"/>
</dbReference>
<dbReference type="SUPFAM" id="SSF103486">
    <property type="entry name" value="V-type ATP synthase subunit C"/>
    <property type="match status" value="1"/>
</dbReference>
<organism>
    <name type="scientific">Saccharomyces cerevisiae (strain ATCC 204508 / S288c)</name>
    <name type="common">Baker's yeast</name>
    <dbReference type="NCBI Taxonomy" id="559292"/>
    <lineage>
        <taxon>Eukaryota</taxon>
        <taxon>Fungi</taxon>
        <taxon>Dikarya</taxon>
        <taxon>Ascomycota</taxon>
        <taxon>Saccharomycotina</taxon>
        <taxon>Saccharomycetes</taxon>
        <taxon>Saccharomycetales</taxon>
        <taxon>Saccharomycetaceae</taxon>
        <taxon>Saccharomyces</taxon>
    </lineage>
</organism>
<gene>
    <name evidence="7" type="primary">VMA6</name>
    <name type="ordered locus">YLR447C</name>
    <name type="ORF">L9324.8</name>
</gene>
<feature type="chain" id="PRO_0000119360" description="V-type proton ATPase subunit d">
    <location>
        <begin position="1"/>
        <end position="345"/>
    </location>
</feature>
<feature type="modified residue" description="N-acetylmethionine" evidence="6 11">
    <location>
        <position position="1"/>
    </location>
</feature>
<feature type="sequence conflict" description="In Ref. 1; AAA35210." evidence="8" ref="1">
    <original>N</original>
    <variation>T</variation>
    <location>
        <position position="32"/>
    </location>
</feature>
<feature type="helix" evidence="19">
    <location>
        <begin position="2"/>
        <end position="5"/>
    </location>
</feature>
<feature type="helix" evidence="19">
    <location>
        <begin position="7"/>
        <end position="22"/>
    </location>
</feature>
<feature type="helix" evidence="19">
    <location>
        <begin position="27"/>
        <end position="34"/>
    </location>
</feature>
<feature type="helix" evidence="19">
    <location>
        <begin position="39"/>
        <end position="46"/>
    </location>
</feature>
<feature type="turn" evidence="19">
    <location>
        <begin position="50"/>
        <end position="57"/>
    </location>
</feature>
<feature type="turn" evidence="19">
    <location>
        <begin position="60"/>
        <end position="62"/>
    </location>
</feature>
<feature type="helix" evidence="19">
    <location>
        <begin position="65"/>
        <end position="85"/>
    </location>
</feature>
<feature type="helix" evidence="19">
    <location>
        <begin position="89"/>
        <end position="115"/>
    </location>
</feature>
<feature type="helix" evidence="19">
    <location>
        <begin position="120"/>
        <end position="125"/>
    </location>
</feature>
<feature type="helix" evidence="13">
    <location>
        <begin position="129"/>
        <end position="131"/>
    </location>
</feature>
<feature type="turn" evidence="17">
    <location>
        <begin position="134"/>
        <end position="136"/>
    </location>
</feature>
<feature type="helix" evidence="19">
    <location>
        <begin position="137"/>
        <end position="140"/>
    </location>
</feature>
<feature type="strand" evidence="20">
    <location>
        <begin position="141"/>
        <end position="144"/>
    </location>
</feature>
<feature type="helix" evidence="19">
    <location>
        <begin position="145"/>
        <end position="151"/>
    </location>
</feature>
<feature type="turn" evidence="19">
    <location>
        <begin position="152"/>
        <end position="154"/>
    </location>
</feature>
<feature type="helix" evidence="19">
    <location>
        <begin position="159"/>
        <end position="162"/>
    </location>
</feature>
<feature type="strand" evidence="18">
    <location>
        <begin position="163"/>
        <end position="168"/>
    </location>
</feature>
<feature type="turn" evidence="12">
    <location>
        <begin position="169"/>
        <end position="171"/>
    </location>
</feature>
<feature type="helix" evidence="19">
    <location>
        <begin position="174"/>
        <end position="199"/>
    </location>
</feature>
<feature type="helix" evidence="19">
    <location>
        <begin position="202"/>
        <end position="227"/>
    </location>
</feature>
<feature type="strand" evidence="16">
    <location>
        <begin position="229"/>
        <end position="231"/>
    </location>
</feature>
<feature type="helix" evidence="19">
    <location>
        <begin position="235"/>
        <end position="239"/>
    </location>
</feature>
<feature type="strand" evidence="14">
    <location>
        <begin position="240"/>
        <end position="242"/>
    </location>
</feature>
<feature type="strand" evidence="19">
    <location>
        <begin position="244"/>
        <end position="248"/>
    </location>
</feature>
<feature type="helix" evidence="19">
    <location>
        <begin position="251"/>
        <end position="256"/>
    </location>
</feature>
<feature type="helix" evidence="19">
    <location>
        <begin position="262"/>
        <end position="269"/>
    </location>
</feature>
<feature type="turn" evidence="19">
    <location>
        <begin position="273"/>
        <end position="280"/>
    </location>
</feature>
<feature type="helix" evidence="19">
    <location>
        <begin position="284"/>
        <end position="299"/>
    </location>
</feature>
<feature type="strand" evidence="15">
    <location>
        <begin position="300"/>
        <end position="304"/>
    </location>
</feature>
<feature type="helix" evidence="19">
    <location>
        <begin position="307"/>
        <end position="331"/>
    </location>
</feature>
<feature type="helix" evidence="20">
    <location>
        <begin position="335"/>
        <end position="337"/>
    </location>
</feature>
<feature type="helix" evidence="13">
    <location>
        <begin position="338"/>
        <end position="340"/>
    </location>
</feature>
<name>VA0D_YEAST</name>
<comment type="function">
    <text evidence="5 7">Subunit of the V0 complex of vacuolar(H+)-ATPase (V-ATPase), a multisubunit enzyme composed of a peripheral complex (V1) that hydrolyzes ATP and a membrane integral complex (V0) that translocates protons (PubMed:8509410). V-ATPase is responsible for acidifying and maintaining the pH of intracellular compartments (PubMed:8509410). This subunit is a non-integral membrane component of the membrane pore domain and is required for proper assembly of the V0 sector (PubMed:8509410). Might be involved in the regulated assembly of V1 subunits onto the membrane sector or alternatively may prevent the passage of protons through V0 pores (PubMed:8509410).</text>
</comment>
<comment type="subunit">
    <text evidence="3 4 5">V-ATPase is a heteromultimeric enzyme composed of a peripheral catalytic V1 complex (components A to H) attached to an integral membrane V0 proton pore complex (components: a, c, c', c'', d, e, f and VOA1).</text>
</comment>
<comment type="interaction">
    <interactant intactId="EBI-20201">
        <id>P32366</id>
    </interactant>
    <interactant intactId="EBI-18479">
        <id>P37296</id>
        <label>STV1</label>
    </interactant>
    <organismsDiffer>false</organismsDiffer>
    <experiments>3</experiments>
</comment>
<comment type="interaction">
    <interactant intactId="EBI-20201">
        <id>P32366</id>
    </interactant>
    <interactant intactId="EBI-20245">
        <id>P17255</id>
        <label>VMA1</label>
    </interactant>
    <organismsDiffer>false</organismsDiffer>
    <experiments>7</experiments>
</comment>
<comment type="interaction">
    <interactant intactId="EBI-20201">
        <id>P32366</id>
    </interactant>
    <interactant intactId="EBI-20281">
        <id>P41807</id>
        <label>VMA13</label>
    </interactant>
    <organismsDiffer>false</organismsDiffer>
    <experiments>5</experiments>
</comment>
<comment type="interaction">
    <interactant intactId="EBI-20201">
        <id>P32366</id>
    </interactant>
    <interactant intactId="EBI-20260">
        <id>P31412</id>
        <label>VMA5</label>
    </interactant>
    <organismsDiffer>false</organismsDiffer>
    <experiments>5</experiments>
</comment>
<comment type="interaction">
    <interactant intactId="EBI-20201">
        <id>P32366</id>
    </interactant>
    <interactant intactId="EBI-20272">
        <id>P39111</id>
        <label>VMA7</label>
    </interactant>
    <organismsDiffer>false</organismsDiffer>
    <experiments>8</experiments>
</comment>
<comment type="interaction">
    <interactant intactId="EBI-20201">
        <id>P32366</id>
    </interactant>
    <interactant intactId="EBI-20264">
        <id>P32610</id>
        <label>VMA8</label>
    </interactant>
    <organismsDiffer>false</organismsDiffer>
    <experiments>5</experiments>
</comment>
<comment type="interaction">
    <interactant intactId="EBI-20201">
        <id>P32366</id>
    </interactant>
    <interactant intactId="EBI-20455">
        <id>P32563</id>
        <label>VPH1</label>
    </interactant>
    <organismsDiffer>false</organismsDiffer>
    <experiments>13</experiments>
</comment>
<comment type="subcellular location">
    <subcellularLocation>
        <location evidence="1">Vacuole membrane</location>
        <topology evidence="1">Peripheral membrane protein</topology>
    </subcellularLocation>
</comment>
<comment type="miscellaneous">
    <text evidence="2">Present with 1630 molecules/cell in log phase SD medium.</text>
</comment>
<comment type="similarity">
    <text evidence="8">Belongs to the V-ATPase V0D/AC39 subunit family.</text>
</comment>
<sequence length="345" mass="39791">MEGVYFNIDNGFIEGVVRGYRNGLLSNNQYINLTQCDTLEDLKLQLSSTDYGNFLSSVSSESLTTSLIQEYASSKLYHEFNYIRDQSSGSTRKFMDYITYGYMIDNVALMITGTIHDRDKGEILQRCHPLGWFDTLPTLSVATDLESLYETVLVDTPLAPYFKNCFDTAEELDDMNIEIIRNKLYKAYLEDFYNFVTEEIPEPAKECMQTLLGFEADRRSINIALNSLQSSDIDPDLKSDLLPNIGKLYPLATFHLAQAQDFEGVRAALANVYEYRGFLETGNLEDHFYQLEMELCRDAFTQQFAISTVWAWMKSKEQEVRNITWIAECIAQNQRERINNYISVY</sequence>
<proteinExistence type="evidence at protein level"/>
<keyword id="KW-0002">3D-structure</keyword>
<keyword id="KW-0007">Acetylation</keyword>
<keyword id="KW-0903">Direct protein sequencing</keyword>
<keyword id="KW-0375">Hydrogen ion transport</keyword>
<keyword id="KW-0406">Ion transport</keyword>
<keyword id="KW-0472">Membrane</keyword>
<keyword id="KW-1185">Reference proteome</keyword>
<keyword id="KW-0813">Transport</keyword>
<keyword id="KW-0926">Vacuole</keyword>
<accession>P32366</accession>
<accession>D6VZ81</accession>
<reference key="1">
    <citation type="journal article" date="1993" name="J. Biol. Chem.">
        <title>The Saccharomyces cerevisiae VMA6 gene encodes the 36-kDa subunit of the vacuolar H(+)-ATPase membrane sector.</title>
        <authorList>
            <person name="Bauerle C."/>
            <person name="Ho M.N."/>
            <person name="Lindorfer M.A."/>
            <person name="Stevens T.H."/>
        </authorList>
    </citation>
    <scope>NUCLEOTIDE SEQUENCE [GENOMIC DNA]</scope>
    <scope>PROTEIN SEQUENCE OF 45-61; 188-198; 256-266; 268-276 AND 338-344</scope>
    <scope>FUNCTION</scope>
    <scope>SUBUNIT</scope>
</reference>
<reference key="2">
    <citation type="journal article" date="1997" name="Nature">
        <title>The nucleotide sequence of Saccharomyces cerevisiae chromosome XII.</title>
        <authorList>
            <person name="Johnston M."/>
            <person name="Hillier L.W."/>
            <person name="Riles L."/>
            <person name="Albermann K."/>
            <person name="Andre B."/>
            <person name="Ansorge W."/>
            <person name="Benes V."/>
            <person name="Brueckner M."/>
            <person name="Delius H."/>
            <person name="Dubois E."/>
            <person name="Duesterhoeft A."/>
            <person name="Entian K.-D."/>
            <person name="Floeth M."/>
            <person name="Goffeau A."/>
            <person name="Hebling U."/>
            <person name="Heumann K."/>
            <person name="Heuss-Neitzel D."/>
            <person name="Hilbert H."/>
            <person name="Hilger F."/>
            <person name="Kleine K."/>
            <person name="Koetter P."/>
            <person name="Louis E.J."/>
            <person name="Messenguy F."/>
            <person name="Mewes H.-W."/>
            <person name="Miosga T."/>
            <person name="Moestl D."/>
            <person name="Mueller-Auer S."/>
            <person name="Nentwich U."/>
            <person name="Obermaier B."/>
            <person name="Piravandi E."/>
            <person name="Pohl T.M."/>
            <person name="Portetelle D."/>
            <person name="Purnelle B."/>
            <person name="Rechmann S."/>
            <person name="Rieger M."/>
            <person name="Rinke M."/>
            <person name="Rose M."/>
            <person name="Scharfe M."/>
            <person name="Scherens B."/>
            <person name="Scholler P."/>
            <person name="Schwager C."/>
            <person name="Schwarz S."/>
            <person name="Underwood A.P."/>
            <person name="Urrestarazu L.A."/>
            <person name="Vandenbol M."/>
            <person name="Verhasselt P."/>
            <person name="Vierendeels F."/>
            <person name="Voet M."/>
            <person name="Volckaert G."/>
            <person name="Voss H."/>
            <person name="Wambutt R."/>
            <person name="Wedler E."/>
            <person name="Wedler H."/>
            <person name="Zimmermann F.K."/>
            <person name="Zollner A."/>
            <person name="Hani J."/>
            <person name="Hoheisel J.D."/>
        </authorList>
    </citation>
    <scope>NUCLEOTIDE SEQUENCE [LARGE SCALE GENOMIC DNA]</scope>
    <source>
        <strain>ATCC 204508 / S288c</strain>
    </source>
</reference>
<reference key="3">
    <citation type="journal article" date="2014" name="G3 (Bethesda)">
        <title>The reference genome sequence of Saccharomyces cerevisiae: Then and now.</title>
        <authorList>
            <person name="Engel S.R."/>
            <person name="Dietrich F.S."/>
            <person name="Fisk D.G."/>
            <person name="Binkley G."/>
            <person name="Balakrishnan R."/>
            <person name="Costanzo M.C."/>
            <person name="Dwight S.S."/>
            <person name="Hitz B.C."/>
            <person name="Karra K."/>
            <person name="Nash R.S."/>
            <person name="Weng S."/>
            <person name="Wong E.D."/>
            <person name="Lloyd P."/>
            <person name="Skrzypek M.S."/>
            <person name="Miyasato S.R."/>
            <person name="Simison M."/>
            <person name="Cherry J.M."/>
        </authorList>
    </citation>
    <scope>GENOME REANNOTATION</scope>
    <source>
        <strain>ATCC 204508 / S288c</strain>
    </source>
</reference>
<reference key="4">
    <citation type="submission" date="2005-06" db="UniProtKB">
        <authorList>
            <person name="Bienvenut W.V."/>
            <person name="Peters C."/>
        </authorList>
    </citation>
    <scope>PROTEIN SEQUENCE OF 1-18; 76-84; 164-181; 187-276; 298-314 AND 322-335</scope>
    <scope>CLEAVAGE OF INITIATOR METHIONINE</scope>
    <scope>ACETYLATION AT MET-1</scope>
    <scope>IDENTIFICATION BY MASS SPECTROMETRY</scope>
</reference>
<reference key="5">
    <citation type="journal article" date="2003" name="Nature">
        <title>Global analysis of protein localization in budding yeast.</title>
        <authorList>
            <person name="Huh W.-K."/>
            <person name="Falvo J.V."/>
            <person name="Gerke L.C."/>
            <person name="Carroll A.S."/>
            <person name="Howson R.W."/>
            <person name="Weissman J.S."/>
            <person name="O'Shea E.K."/>
        </authorList>
    </citation>
    <scope>SUBCELLULAR LOCATION [LARGE SCALE ANALYSIS]</scope>
</reference>
<reference key="6">
    <citation type="journal article" date="2003" name="Nature">
        <title>Global analysis of protein expression in yeast.</title>
        <authorList>
            <person name="Ghaemmaghami S."/>
            <person name="Huh W.-K."/>
            <person name="Bower K."/>
            <person name="Howson R.W."/>
            <person name="Belle A."/>
            <person name="Dephoure N."/>
            <person name="O'Shea E.K."/>
            <person name="Weissman J.S."/>
        </authorList>
    </citation>
    <scope>LEVEL OF PROTEIN EXPRESSION [LARGE SCALE ANALYSIS]</scope>
</reference>
<reference key="7">
    <citation type="journal article" date="2012" name="Proc. Natl. Acad. Sci. U.S.A.">
        <title>N-terminal acetylome analyses and functional insights of the N-terminal acetyltransferase NatB.</title>
        <authorList>
            <person name="Van Damme P."/>
            <person name="Lasa M."/>
            <person name="Polevoda B."/>
            <person name="Gazquez C."/>
            <person name="Elosegui-Artola A."/>
            <person name="Kim D.S."/>
            <person name="De Juan-Pardo E."/>
            <person name="Demeyer K."/>
            <person name="Hole K."/>
            <person name="Larrea E."/>
            <person name="Timmerman E."/>
            <person name="Prieto J."/>
            <person name="Arnesen T."/>
            <person name="Sherman F."/>
            <person name="Gevaert K."/>
            <person name="Aldabe R."/>
        </authorList>
    </citation>
    <scope>ACETYLATION [LARGE SCALE ANALYSIS] AT MET-1</scope>
    <scope>IDENTIFICATION BY MASS SPECTROMETRY [LARGE SCALE ANALYSIS]</scope>
</reference>
<reference evidence="9" key="8">
    <citation type="journal article" date="2016" name="Nature">
        <title>Atomic model for the membrane-embedded VO motor of a eukaryotic V-ATPase.</title>
        <authorList>
            <person name="Mazhab-Jafari M.T."/>
            <person name="Rohou A."/>
            <person name="Schmidt C."/>
            <person name="Bueler S.A."/>
            <person name="Benlekbir S."/>
            <person name="Robinson C.V."/>
            <person name="Rubinstein J.L."/>
        </authorList>
    </citation>
    <scope>STRUCTURE BY ELECTRON MICROSCOPY (3.90 ANGSTROMS) OF 4-341</scope>
    <scope>IDENTIFICATION IN THE V-ATPASE COMPLEX</scope>
</reference>
<reference evidence="10" key="9">
    <citation type="journal article" date="2018" name="Mol. Cell">
        <title>The 3.5-A cryoEM structure of nanodisc-reconstituted yeast vacuolar ATPase V0 proton channel.</title>
        <authorList>
            <person name="Roh S.H."/>
            <person name="Stam N.J."/>
            <person name="Hryc C.F."/>
            <person name="Couoh-Cardel S."/>
            <person name="Pintilie G."/>
            <person name="Chiu W."/>
            <person name="Wilkens S."/>
        </authorList>
    </citation>
    <scope>STRUCTURE BY ELECTRON MICROSCOPY (3.50 ANGSTROMS)</scope>
    <scope>IDENTIFICATION IN THE V-ATPASE COMPLEX</scope>
</reference>
<evidence type="ECO:0000269" key="1">
    <source>
    </source>
</evidence>
<evidence type="ECO:0000269" key="2">
    <source>
    </source>
</evidence>
<evidence type="ECO:0000269" key="3">
    <source>
    </source>
</evidence>
<evidence type="ECO:0000269" key="4">
    <source>
    </source>
</evidence>
<evidence type="ECO:0000269" key="5">
    <source>
    </source>
</evidence>
<evidence type="ECO:0000269" key="6">
    <source ref="4"/>
</evidence>
<evidence type="ECO:0000303" key="7">
    <source>
    </source>
</evidence>
<evidence type="ECO:0000305" key="8"/>
<evidence type="ECO:0007744" key="9">
    <source>
        <dbReference type="PDB" id="5TJ5"/>
    </source>
</evidence>
<evidence type="ECO:0007744" key="10">
    <source>
        <dbReference type="PDB" id="6C6L"/>
    </source>
</evidence>
<evidence type="ECO:0007744" key="11">
    <source>
    </source>
</evidence>
<evidence type="ECO:0007829" key="12">
    <source>
        <dbReference type="PDB" id="6C6L"/>
    </source>
</evidence>
<evidence type="ECO:0007829" key="13">
    <source>
        <dbReference type="PDB" id="6M0R"/>
    </source>
</evidence>
<evidence type="ECO:0007829" key="14">
    <source>
        <dbReference type="PDB" id="6O7T"/>
    </source>
</evidence>
<evidence type="ECO:0007829" key="15">
    <source>
        <dbReference type="PDB" id="6O7U"/>
    </source>
</evidence>
<evidence type="ECO:0007829" key="16">
    <source>
        <dbReference type="PDB" id="6PE5"/>
    </source>
</evidence>
<evidence type="ECO:0007829" key="17">
    <source>
        <dbReference type="PDB" id="7TAO"/>
    </source>
</evidence>
<evidence type="ECO:0007829" key="18">
    <source>
        <dbReference type="PDB" id="7TAP"/>
    </source>
</evidence>
<evidence type="ECO:0007829" key="19">
    <source>
        <dbReference type="PDB" id="8EAS"/>
    </source>
</evidence>
<evidence type="ECO:0007829" key="20">
    <source>
        <dbReference type="PDB" id="8EAT"/>
    </source>
</evidence>